<comment type="function">
    <text evidence="3">Involved in the detoxification of the Fusarium mycotoxin deoxynivalenol by the transfer of glucose from UDP-D-glucose to the hydroxyl group at C-3, forming deoxynivalenol-3-O-beta-D-glucoside.</text>
</comment>
<comment type="similarity">
    <text evidence="5">Belongs to the UDP-glycosyltransferase family.</text>
</comment>
<sequence>METTVTAVSGTTSSSVGHGAGGGAARVLLLPSPGAQGHTNPMLQLGRRLAYHGLRPTLVATRYVLSTTPAPGAPFDVAAISDGFDAGGMALCPDPAEYFSRLEAVGSETLRELLLSEARAGRPVRVLVYDAHLAWARRVAQASGVAAAAFFSQPCSVDVVYGELWAGRLALPATDGRALLARGVLGVELGLEDMPPFAAVPESQPAFLQVSVGQFEGLDYADDVLVNSFRDIEPKEVEYMELTWRAKMVGPTLPSYYLGDGRLPSNKSYGFDLFNSDVECMDWLEKQMNSSVVLVSYGTVSNYDATQLEELGNGLCNSSKPFLWVVRSNEEHKLSEELKEKCGKIGLIVSWCPQLEVLAHRAIGCFVTHCGWNSTLEALVNGVPFVGIPHWADQPTIAKYVESAWGMGVRARKNKNGCLKKEEVERCIREVMDGERKDEYKKNAMNWMQKAKEAMQEGGSSDKHVAEFATKYSSI</sequence>
<name>UGT13_HORVV</name>
<keyword id="KW-0216">Detoxification</keyword>
<keyword id="KW-0328">Glycosyltransferase</keyword>
<keyword id="KW-0547">Nucleotide-binding</keyword>
<keyword id="KW-1185">Reference proteome</keyword>
<keyword id="KW-0808">Transferase</keyword>
<accession>M0Y4P1</accession>
<accession>D3WYW2</accession>
<dbReference type="EC" id="2.4.1.-" evidence="3"/>
<dbReference type="EMBL" id="GU170355">
    <property type="protein sequence ID" value="ADC92550.1"/>
    <property type="molecule type" value="mRNA"/>
</dbReference>
<dbReference type="RefSeq" id="NP_001413739.1">
    <property type="nucleotide sequence ID" value="NM_001426810.1"/>
</dbReference>
<dbReference type="SMR" id="M0Y4P1"/>
<dbReference type="FunCoup" id="M0Y4P1">
    <property type="interactions" value="1"/>
</dbReference>
<dbReference type="STRING" id="112509.M0Y4P1"/>
<dbReference type="CAZy" id="GT1">
    <property type="family name" value="Glycosyltransferase Family 1"/>
</dbReference>
<dbReference type="PaxDb" id="4513-MLOC_65675.1"/>
<dbReference type="EnsemblPlants" id="HORVU.MOREX.r2.5HG0384710.1">
    <property type="protein sequence ID" value="HORVU.MOREX.r2.5HG0384710.1"/>
    <property type="gene ID" value="HORVU.MOREX.r2.5HG0384710"/>
</dbReference>
<dbReference type="EnsemblPlants" id="HORVU.MOREX.r3.5HG0464880.1">
    <property type="protein sequence ID" value="HORVU.MOREX.r3.5HG0464880.1"/>
    <property type="gene ID" value="HORVU.MOREX.r3.5HG0464880"/>
</dbReference>
<dbReference type="GeneID" id="123396691"/>
<dbReference type="Gramene" id="HORVU.MOREX.r2.5HG0384710.1">
    <property type="protein sequence ID" value="HORVU.MOREX.r2.5HG0384710.1"/>
    <property type="gene ID" value="HORVU.MOREX.r2.5HG0384710"/>
</dbReference>
<dbReference type="Gramene" id="HORVU.MOREX.r3.5HG0464880.1">
    <property type="protein sequence ID" value="HORVU.MOREX.r3.5HG0464880.1"/>
    <property type="gene ID" value="HORVU.MOREX.r3.5HG0464880"/>
</dbReference>
<dbReference type="eggNOG" id="KOG1192">
    <property type="taxonomic scope" value="Eukaryota"/>
</dbReference>
<dbReference type="InParanoid" id="M0Y4P1"/>
<dbReference type="OMA" id="FCEQSIE"/>
<dbReference type="OrthoDB" id="678493at2759"/>
<dbReference type="Proteomes" id="UP000011116">
    <property type="component" value="Chromosome 5H"/>
</dbReference>
<dbReference type="ExpressionAtlas" id="M0Y4P1">
    <property type="expression patterns" value="baseline and differential"/>
</dbReference>
<dbReference type="GO" id="GO:0005737">
    <property type="term" value="C:cytoplasm"/>
    <property type="evidence" value="ECO:0000318"/>
    <property type="project" value="GO_Central"/>
</dbReference>
<dbReference type="GO" id="GO:0000166">
    <property type="term" value="F:nucleotide binding"/>
    <property type="evidence" value="ECO:0007669"/>
    <property type="project" value="UniProtKB-KW"/>
</dbReference>
<dbReference type="GO" id="GO:0080043">
    <property type="term" value="F:quercetin 3-O-glucosyltransferase activity"/>
    <property type="evidence" value="ECO:0000318"/>
    <property type="project" value="GO_Central"/>
</dbReference>
<dbReference type="GO" id="GO:0080044">
    <property type="term" value="F:quercetin 7-O-glucosyltransferase activity"/>
    <property type="evidence" value="ECO:0000318"/>
    <property type="project" value="GO_Central"/>
</dbReference>
<dbReference type="GO" id="GO:0008194">
    <property type="term" value="F:UDP-glycosyltransferase activity"/>
    <property type="evidence" value="ECO:0000314"/>
    <property type="project" value="UniProtKB"/>
</dbReference>
<dbReference type="GO" id="GO:0098754">
    <property type="term" value="P:detoxification"/>
    <property type="evidence" value="ECO:0000314"/>
    <property type="project" value="UniProtKB"/>
</dbReference>
<dbReference type="CDD" id="cd03784">
    <property type="entry name" value="GT1_Gtf-like"/>
    <property type="match status" value="1"/>
</dbReference>
<dbReference type="FunFam" id="3.40.50.2000:FF:000019">
    <property type="entry name" value="Glycosyltransferase"/>
    <property type="match status" value="1"/>
</dbReference>
<dbReference type="FunFam" id="3.40.50.2000:FF:000057">
    <property type="entry name" value="Glycosyltransferase"/>
    <property type="match status" value="1"/>
</dbReference>
<dbReference type="Gene3D" id="3.40.50.2000">
    <property type="entry name" value="Glycogen Phosphorylase B"/>
    <property type="match status" value="2"/>
</dbReference>
<dbReference type="InterPro" id="IPR002213">
    <property type="entry name" value="UDP_glucos_trans"/>
</dbReference>
<dbReference type="PANTHER" id="PTHR11926">
    <property type="entry name" value="GLUCOSYL/GLUCURONOSYL TRANSFERASES"/>
    <property type="match status" value="1"/>
</dbReference>
<dbReference type="PANTHER" id="PTHR11926:SF732">
    <property type="entry name" value="UDP-GLYCOSYLTRANSFERASE 79"/>
    <property type="match status" value="1"/>
</dbReference>
<dbReference type="Pfam" id="PF00201">
    <property type="entry name" value="UDPGT"/>
    <property type="match status" value="1"/>
</dbReference>
<dbReference type="SUPFAM" id="SSF53756">
    <property type="entry name" value="UDP-Glycosyltransferase/glycogen phosphorylase"/>
    <property type="match status" value="1"/>
</dbReference>
<evidence type="ECO:0000250" key="1">
    <source>
        <dbReference type="UniProtKB" id="Q7XT97"/>
    </source>
</evidence>
<evidence type="ECO:0000256" key="2">
    <source>
        <dbReference type="SAM" id="MobiDB-lite"/>
    </source>
</evidence>
<evidence type="ECO:0000269" key="3">
    <source>
    </source>
</evidence>
<evidence type="ECO:0000303" key="4">
    <source>
    </source>
</evidence>
<evidence type="ECO:0000305" key="5"/>
<feature type="chain" id="PRO_0000441956" description="UDP-glucosyltransferase UGT13248">
    <location>
        <begin position="1"/>
        <end position="475"/>
    </location>
</feature>
<feature type="region of interest" description="Disordered" evidence="2">
    <location>
        <begin position="1"/>
        <end position="20"/>
    </location>
</feature>
<feature type="compositionally biased region" description="Low complexity" evidence="2">
    <location>
        <begin position="1"/>
        <end position="17"/>
    </location>
</feature>
<feature type="binding site" evidence="1">
    <location>
        <position position="38"/>
    </location>
    <ligand>
        <name>UDP-alpha-D-glucose</name>
        <dbReference type="ChEBI" id="CHEBI:58885"/>
    </ligand>
</feature>
<feature type="binding site" evidence="1">
    <location>
        <position position="152"/>
    </location>
    <ligand>
        <name>UDP-alpha-D-glucose</name>
        <dbReference type="ChEBI" id="CHEBI:58885"/>
    </ligand>
</feature>
<feature type="binding site" evidence="1">
    <location>
        <position position="299"/>
    </location>
    <ligand>
        <name>UDP-alpha-D-glucose</name>
        <dbReference type="ChEBI" id="CHEBI:58885"/>
    </ligand>
</feature>
<feature type="binding site" evidence="1">
    <location>
        <position position="352"/>
    </location>
    <ligand>
        <name>UDP-alpha-D-glucose</name>
        <dbReference type="ChEBI" id="CHEBI:58885"/>
    </ligand>
</feature>
<feature type="binding site" evidence="1">
    <location>
        <begin position="369"/>
        <end position="377"/>
    </location>
    <ligand>
        <name>UDP-alpha-D-glucose</name>
        <dbReference type="ChEBI" id="CHEBI:58885"/>
    </ligand>
</feature>
<feature type="binding site" evidence="1">
    <location>
        <begin position="393"/>
        <end position="394"/>
    </location>
    <ligand>
        <name>UDP-alpha-D-glucose</name>
        <dbReference type="ChEBI" id="CHEBI:58885"/>
    </ligand>
</feature>
<feature type="sequence conflict" description="In Ref. 1; ADC92550." evidence="5" ref="1">
    <original>F</original>
    <variation>L</variation>
    <location>
        <position position="271"/>
    </location>
</feature>
<feature type="sequence conflict" description="In Ref. 1; ADC92550." evidence="5" ref="1">
    <original>D</original>
    <variation>E</variation>
    <location>
        <position position="277"/>
    </location>
</feature>
<organism>
    <name type="scientific">Hordeum vulgare subsp. vulgare</name>
    <name type="common">Domesticated barley</name>
    <dbReference type="NCBI Taxonomy" id="112509"/>
    <lineage>
        <taxon>Eukaryota</taxon>
        <taxon>Viridiplantae</taxon>
        <taxon>Streptophyta</taxon>
        <taxon>Embryophyta</taxon>
        <taxon>Tracheophyta</taxon>
        <taxon>Spermatophyta</taxon>
        <taxon>Magnoliopsida</taxon>
        <taxon>Liliopsida</taxon>
        <taxon>Poales</taxon>
        <taxon>Poaceae</taxon>
        <taxon>BOP clade</taxon>
        <taxon>Pooideae</taxon>
        <taxon>Triticodae</taxon>
        <taxon>Triticeae</taxon>
        <taxon>Hordeinae</taxon>
        <taxon>Hordeum</taxon>
    </lineage>
</organism>
<proteinExistence type="evidence at transcript level"/>
<protein>
    <recommendedName>
        <fullName evidence="5">UDP-glucosyltransferase UGT13248</fullName>
        <shortName evidence="4">HvUGT13248</shortName>
        <ecNumber evidence="3">2.4.1.-</ecNumber>
    </recommendedName>
    <alternativeName>
        <fullName evidence="4">Deoxynivalenol-UDP-glucosyltransferase</fullName>
    </alternativeName>
</protein>
<reference key="1">
    <citation type="journal article" date="2010" name="Mol. Plant Microbe Interact.">
        <title>Validation of a candidate deoxynivalenol-inactivating UDP-glucosyltransferase from barley by heterologous expression in yeast.</title>
        <authorList>
            <person name="Schweiger W."/>
            <person name="Boddu J."/>
            <person name="Shin S."/>
            <person name="Poppenberger B."/>
            <person name="Berthiller F."/>
            <person name="Lemmens M."/>
            <person name="Muehlbauer G.J."/>
            <person name="Adam G."/>
        </authorList>
    </citation>
    <scope>NUCLEOTIDE SEQUENCE [MRNA]</scope>
    <scope>FUNCTION</scope>
    <source>
        <tissue>Spike</tissue>
    </source>
</reference>
<reference key="2">
    <citation type="journal article" date="2012" name="Nature">
        <title>A physical, genetic and functional sequence assembly of the barley genome.</title>
        <authorList>
            <consortium name="International Barley Genome Sequencing Consortium"/>
            <person name="Mayer K.F."/>
            <person name="Waugh R."/>
            <person name="Brown J.W."/>
            <person name="Schulman A."/>
            <person name="Langridge P."/>
            <person name="Platzer M."/>
            <person name="Fincher G.B."/>
            <person name="Muehlbauer G.J."/>
            <person name="Sato K."/>
            <person name="Close T.J."/>
            <person name="Wise R.P."/>
            <person name="Stein N."/>
        </authorList>
    </citation>
    <scope>NUCLEOTIDE SEQUENCE [LARGE SCALE GENOMIC DNA]</scope>
</reference>